<organism>
    <name type="scientific">Streptococcus agalactiae serotype V (strain ATCC BAA-611 / 2603 V/R)</name>
    <dbReference type="NCBI Taxonomy" id="208435"/>
    <lineage>
        <taxon>Bacteria</taxon>
        <taxon>Bacillati</taxon>
        <taxon>Bacillota</taxon>
        <taxon>Bacilli</taxon>
        <taxon>Lactobacillales</taxon>
        <taxon>Streptococcaceae</taxon>
        <taxon>Streptococcus</taxon>
    </lineage>
</organism>
<feature type="chain" id="PRO_0000197557" description="Transposase from transposon Tn1545">
    <location>
        <begin position="1"/>
        <end position="405"/>
    </location>
</feature>
<feature type="domain" description="Core-binding (CB)" evidence="2">
    <location>
        <begin position="79"/>
        <end position="163"/>
    </location>
</feature>
<feature type="domain" description="Tyr recombinase" evidence="1">
    <location>
        <begin position="186"/>
        <end position="392"/>
    </location>
</feature>
<feature type="active site" evidence="1">
    <location>
        <position position="225"/>
    </location>
</feature>
<feature type="active site" evidence="1">
    <location>
        <position position="264"/>
    </location>
</feature>
<feature type="active site" evidence="1">
    <location>
        <position position="343"/>
    </location>
</feature>
<feature type="active site" evidence="1">
    <location>
        <position position="346"/>
    </location>
</feature>
<feature type="active site" evidence="1">
    <location>
        <position position="369"/>
    </location>
</feature>
<feature type="active site" description="O-(3'-phospho-DNA)-tyrosine intermediate" evidence="1">
    <location>
        <position position="379"/>
    </location>
</feature>
<proteinExistence type="inferred from homology"/>
<comment type="similarity">
    <text evidence="3">Belongs to the 'phage' integrase family.</text>
</comment>
<reference key="1">
    <citation type="journal article" date="2002" name="Proc. Natl. Acad. Sci. U.S.A.">
        <title>Complete genome sequence and comparative genomic analysis of an emerging human pathogen, serotype V Streptococcus agalactiae.</title>
        <authorList>
            <person name="Tettelin H."/>
            <person name="Masignani V."/>
            <person name="Cieslewicz M.J."/>
            <person name="Eisen J.A."/>
            <person name="Peterson S.N."/>
            <person name="Wessels M.R."/>
            <person name="Paulsen I.T."/>
            <person name="Nelson K.E."/>
            <person name="Margarit I."/>
            <person name="Read T.D."/>
            <person name="Madoff L.C."/>
            <person name="Wolf A.M."/>
            <person name="Beanan M.J."/>
            <person name="Brinkac L.M."/>
            <person name="Daugherty S.C."/>
            <person name="DeBoy R.T."/>
            <person name="Durkin A.S."/>
            <person name="Kolonay J.F."/>
            <person name="Madupu R."/>
            <person name="Lewis M.R."/>
            <person name="Radune D."/>
            <person name="Fedorova N.B."/>
            <person name="Scanlan D."/>
            <person name="Khouri H.M."/>
            <person name="Mulligan S."/>
            <person name="Carty H.A."/>
            <person name="Cline R.T."/>
            <person name="Van Aken S.E."/>
            <person name="Gill J."/>
            <person name="Scarselli M."/>
            <person name="Mora M."/>
            <person name="Iacobini E.T."/>
            <person name="Brettoni C."/>
            <person name="Galli G."/>
            <person name="Mariani M."/>
            <person name="Vegni F."/>
            <person name="Maione D."/>
            <person name="Rinaudo D."/>
            <person name="Rappuoli R."/>
            <person name="Telford J.L."/>
            <person name="Kasper D.L."/>
            <person name="Grandi G."/>
            <person name="Fraser C.M."/>
        </authorList>
    </citation>
    <scope>NUCLEOTIDE SEQUENCE [LARGE SCALE GENOMIC DNA]</scope>
    <source>
        <strain>ATCC BAA-611 / 2603 V/R</strain>
    </source>
</reference>
<sequence length="405" mass="47022">MSEKRRDNKGRILKTGESQRKDGRYLYKYIDSFGEPQFVYSWKLVATDRVPAGKRDCISLREKIAELQKDIHDGIDVVGKKMTLCQLYAKQNAQRPKVRKNTETGRKYLMDILKKDKLGVRSIDSIKPSDAKEWAIRMSENGYAYQTINNYKRSLKASFYIAIQDDCVRKNPFDFQLKAVLDDDTVPKTVLTEEQEEKLLAFAKADKTYSKNYDEILILLKTGLRISEFGGLTLPDLDFENRLVNIDHQLLRDTEIGYYIETPKTKSGERQVPMVEEAYQAFKRVLANRKNDKRVEIDGYSDFLFLNRKNYPKVASDYNGMMKGLVKKYNKYNEDKLPHITPHSLRHTFCTNYANAGMNPKALQYIMGHANIAMTLNYYAHATFDSAMAEMKRLNKEKQQERLVA</sequence>
<accession>P62904</accession>
<accession>P27451</accession>
<evidence type="ECO:0000255" key="1">
    <source>
        <dbReference type="PROSITE-ProRule" id="PRU01246"/>
    </source>
</evidence>
<evidence type="ECO:0000255" key="2">
    <source>
        <dbReference type="PROSITE-ProRule" id="PRU01248"/>
    </source>
</evidence>
<evidence type="ECO:0000305" key="3"/>
<dbReference type="EMBL" id="AE009948">
    <property type="protein sequence ID" value="AAM99801.1"/>
    <property type="molecule type" value="Genomic_DNA"/>
</dbReference>
<dbReference type="RefSeq" id="NP_687929.1">
    <property type="nucleotide sequence ID" value="NC_004116.1"/>
</dbReference>
<dbReference type="RefSeq" id="WP_001291561.1">
    <property type="nucleotide sequence ID" value="NC_004116.1"/>
</dbReference>
<dbReference type="BMRB" id="P62904"/>
<dbReference type="SMR" id="P62904"/>
<dbReference type="STRING" id="208435.SAG0915"/>
<dbReference type="KEGG" id="sag:SAG0915"/>
<dbReference type="PATRIC" id="fig|208435.3.peg.920"/>
<dbReference type="HOGENOM" id="CLU_027562_17_4_9"/>
<dbReference type="OrthoDB" id="9803188at2"/>
<dbReference type="PRO" id="PR:P62904"/>
<dbReference type="Proteomes" id="UP000000821">
    <property type="component" value="Chromosome"/>
</dbReference>
<dbReference type="GO" id="GO:0003677">
    <property type="term" value="F:DNA binding"/>
    <property type="evidence" value="ECO:0007669"/>
    <property type="project" value="UniProtKB-KW"/>
</dbReference>
<dbReference type="GO" id="GO:0008907">
    <property type="term" value="F:integrase activity"/>
    <property type="evidence" value="ECO:0007669"/>
    <property type="project" value="InterPro"/>
</dbReference>
<dbReference type="GO" id="GO:0006310">
    <property type="term" value="P:DNA recombination"/>
    <property type="evidence" value="ECO:0007669"/>
    <property type="project" value="UniProtKB-KW"/>
</dbReference>
<dbReference type="GO" id="GO:0075713">
    <property type="term" value="P:establishment of integrated proviral latency"/>
    <property type="evidence" value="ECO:0007669"/>
    <property type="project" value="UniProtKB-KW"/>
</dbReference>
<dbReference type="GO" id="GO:0046718">
    <property type="term" value="P:symbiont entry into host cell"/>
    <property type="evidence" value="ECO:0007669"/>
    <property type="project" value="UniProtKB-KW"/>
</dbReference>
<dbReference type="GO" id="GO:0044826">
    <property type="term" value="P:viral genome integration into host DNA"/>
    <property type="evidence" value="ECO:0007669"/>
    <property type="project" value="UniProtKB-KW"/>
</dbReference>
<dbReference type="CDD" id="cd01189">
    <property type="entry name" value="INT_ICEBs1_C_like"/>
    <property type="match status" value="1"/>
</dbReference>
<dbReference type="Gene3D" id="1.10.150.130">
    <property type="match status" value="1"/>
</dbReference>
<dbReference type="Gene3D" id="3.30.160.60">
    <property type="entry name" value="Classic Zinc Finger"/>
    <property type="match status" value="1"/>
</dbReference>
<dbReference type="Gene3D" id="1.10.443.10">
    <property type="entry name" value="Intergrase catalytic core"/>
    <property type="match status" value="1"/>
</dbReference>
<dbReference type="InterPro" id="IPR044068">
    <property type="entry name" value="CB"/>
</dbReference>
<dbReference type="InterPro" id="IPR016177">
    <property type="entry name" value="DNA-bd_dom_sf"/>
</dbReference>
<dbReference type="InterPro" id="IPR011010">
    <property type="entry name" value="DNA_brk_join_enz"/>
</dbReference>
<dbReference type="InterPro" id="IPR013762">
    <property type="entry name" value="Integrase-like_cat_sf"/>
</dbReference>
<dbReference type="InterPro" id="IPR002104">
    <property type="entry name" value="Integrase_catalytic"/>
</dbReference>
<dbReference type="InterPro" id="IPR010998">
    <property type="entry name" value="Integrase_recombinase_N"/>
</dbReference>
<dbReference type="InterPro" id="IPR004191">
    <property type="entry name" value="Integrase_Tn916-type_DNA-bd_N"/>
</dbReference>
<dbReference type="InterPro" id="IPR050090">
    <property type="entry name" value="Tyrosine_recombinase_XerCD"/>
</dbReference>
<dbReference type="PANTHER" id="PTHR30349:SF41">
    <property type="entry name" value="INTEGRASE_RECOMBINASE PROTEIN MJ0367-RELATED"/>
    <property type="match status" value="1"/>
</dbReference>
<dbReference type="PANTHER" id="PTHR30349">
    <property type="entry name" value="PHAGE INTEGRASE-RELATED"/>
    <property type="match status" value="1"/>
</dbReference>
<dbReference type="Pfam" id="PF02920">
    <property type="entry name" value="Integrase_DNA"/>
    <property type="match status" value="1"/>
</dbReference>
<dbReference type="Pfam" id="PF00589">
    <property type="entry name" value="Phage_integrase"/>
    <property type="match status" value="1"/>
</dbReference>
<dbReference type="SUPFAM" id="SSF56349">
    <property type="entry name" value="DNA breaking-rejoining enzymes"/>
    <property type="match status" value="1"/>
</dbReference>
<dbReference type="SUPFAM" id="SSF54171">
    <property type="entry name" value="DNA-binding domain"/>
    <property type="match status" value="1"/>
</dbReference>
<dbReference type="PROSITE" id="PS51900">
    <property type="entry name" value="CB"/>
    <property type="match status" value="1"/>
</dbReference>
<dbReference type="PROSITE" id="PS51898">
    <property type="entry name" value="TYR_RECOMBINASE"/>
    <property type="match status" value="1"/>
</dbReference>
<name>TNR5_STRA5</name>
<gene>
    <name type="primary">int</name>
    <name type="ordered locus">SAG0915</name>
</gene>
<keyword id="KW-0229">DNA integration</keyword>
<keyword id="KW-0233">DNA recombination</keyword>
<keyword id="KW-0238">DNA-binding</keyword>
<keyword id="KW-1185">Reference proteome</keyword>
<keyword id="KW-0814">Transposable element</keyword>
<keyword id="KW-1179">Viral genome integration</keyword>
<keyword id="KW-1160">Virus entry into host cell</keyword>
<protein>
    <recommendedName>
        <fullName>Transposase from transposon Tn1545</fullName>
    </recommendedName>
    <alternativeName>
        <fullName>Integrase</fullName>
    </alternativeName>
</protein>